<gene>
    <name type="primary">batf</name>
</gene>
<comment type="function">
    <text evidence="1">AP-1 family transcription factor that controls the differentiation of lineage-specific cells in the immune system: specifically mediates the differentiation of T-helper 17 cells (Th17), follicular T-helper cells (TfH), CD8(+) dendritic cells and class-switch recombination (CSR) in B-cells.</text>
</comment>
<comment type="subcellular location">
    <subcellularLocation>
        <location evidence="2">Nucleus</location>
    </subcellularLocation>
    <subcellularLocation>
        <location evidence="1">Cytoplasm</location>
    </subcellularLocation>
    <text evidence="1">Present in the nucleus and cytoplasm, but shows increased nuclear translocation after activation of T-cells.</text>
</comment>
<comment type="similarity">
    <text evidence="4">Belongs to the bZIP family.</text>
</comment>
<proteinExistence type="inferred from homology"/>
<accession>F7EMX9</accession>
<sequence length="115" mass="13083">MQQEPDRNEQGYCSSPPSSNKQDSSDDTKKIQRREKNRIAAQKSRQRQTQKADSLHIESENLERLNSALRGEISGLREELKYLTCVLSTHQPVCVLGPTKPQAILPHVGSTRYQH</sequence>
<reference key="1">
    <citation type="journal article" date="2010" name="Science">
        <title>The genome of the Western clawed frog Xenopus tropicalis.</title>
        <authorList>
            <person name="Hellsten U."/>
            <person name="Harland R.M."/>
            <person name="Gilchrist M.J."/>
            <person name="Hendrix D."/>
            <person name="Jurka J."/>
            <person name="Kapitonov V."/>
            <person name="Ovcharenko I."/>
            <person name="Putnam N.H."/>
            <person name="Shu S."/>
            <person name="Taher L."/>
            <person name="Blitz I.L."/>
            <person name="Blumberg B."/>
            <person name="Dichmann D.S."/>
            <person name="Dubchak I."/>
            <person name="Amaya E."/>
            <person name="Detter J.C."/>
            <person name="Fletcher R."/>
            <person name="Gerhard D.S."/>
            <person name="Goodstein D."/>
            <person name="Graves T."/>
            <person name="Grigoriev I.V."/>
            <person name="Grimwood J."/>
            <person name="Kawashima T."/>
            <person name="Lindquist E."/>
            <person name="Lucas S.M."/>
            <person name="Mead P.E."/>
            <person name="Mitros T."/>
            <person name="Ogino H."/>
            <person name="Ohta Y."/>
            <person name="Poliakov A.V."/>
            <person name="Pollet N."/>
            <person name="Robert J."/>
            <person name="Salamov A."/>
            <person name="Sater A.K."/>
            <person name="Schmutz J."/>
            <person name="Terry A."/>
            <person name="Vize P.D."/>
            <person name="Warren W.C."/>
            <person name="Wells D."/>
            <person name="Wills A."/>
            <person name="Wilson R.K."/>
            <person name="Zimmerman L.B."/>
            <person name="Zorn A.M."/>
            <person name="Grainger R."/>
            <person name="Grammer T."/>
            <person name="Khokha M.K."/>
            <person name="Richardson P.M."/>
            <person name="Rokhsar D.S."/>
        </authorList>
    </citation>
    <scope>NUCLEOTIDE SEQUENCE [LARGE SCALE GENOMIC DNA]</scope>
</reference>
<organism>
    <name type="scientific">Xenopus tropicalis</name>
    <name type="common">Western clawed frog</name>
    <name type="synonym">Silurana tropicalis</name>
    <dbReference type="NCBI Taxonomy" id="8364"/>
    <lineage>
        <taxon>Eukaryota</taxon>
        <taxon>Metazoa</taxon>
        <taxon>Chordata</taxon>
        <taxon>Craniata</taxon>
        <taxon>Vertebrata</taxon>
        <taxon>Euteleostomi</taxon>
        <taxon>Amphibia</taxon>
        <taxon>Batrachia</taxon>
        <taxon>Anura</taxon>
        <taxon>Pipoidea</taxon>
        <taxon>Pipidae</taxon>
        <taxon>Xenopodinae</taxon>
        <taxon>Xenopus</taxon>
        <taxon>Silurana</taxon>
    </lineage>
</organism>
<name>BATF_XENTR</name>
<keyword id="KW-0010">Activator</keyword>
<keyword id="KW-0963">Cytoplasm</keyword>
<keyword id="KW-0221">Differentiation</keyword>
<keyword id="KW-0238">DNA-binding</keyword>
<keyword id="KW-0539">Nucleus</keyword>
<keyword id="KW-1185">Reference proteome</keyword>
<keyword id="KW-0678">Repressor</keyword>
<keyword id="KW-0804">Transcription</keyword>
<keyword id="KW-0805">Transcription regulation</keyword>
<protein>
    <recommendedName>
        <fullName>Basic leucine zipper transcriptional factor ATF-like</fullName>
    </recommendedName>
    <alternativeName>
        <fullName>B-cell-activating transcription factor</fullName>
        <shortName>B-ATF</shortName>
    </alternativeName>
</protein>
<feature type="chain" id="PRO_0000420467" description="Basic leucine zipper transcriptional factor ATF-like">
    <location>
        <begin position="1"/>
        <end position="115"/>
    </location>
</feature>
<feature type="domain" description="bZIP" evidence="2">
    <location>
        <begin position="27"/>
        <end position="90"/>
    </location>
</feature>
<feature type="region of interest" description="Disordered" evidence="3">
    <location>
        <begin position="1"/>
        <end position="57"/>
    </location>
</feature>
<feature type="region of interest" description="Basic motif">
    <location>
        <begin position="29"/>
        <end position="51"/>
    </location>
</feature>
<feature type="region of interest" description="Leucine-zipper">
    <location>
        <begin position="55"/>
        <end position="83"/>
    </location>
</feature>
<evidence type="ECO:0000250" key="1"/>
<evidence type="ECO:0000255" key="2">
    <source>
        <dbReference type="PROSITE-ProRule" id="PRU00978"/>
    </source>
</evidence>
<evidence type="ECO:0000256" key="3">
    <source>
        <dbReference type="SAM" id="MobiDB-lite"/>
    </source>
</evidence>
<evidence type="ECO:0000305" key="4"/>
<dbReference type="EMBL" id="AAMC01082899">
    <property type="status" value="NOT_ANNOTATED_CDS"/>
    <property type="molecule type" value="Genomic_DNA"/>
</dbReference>
<dbReference type="RefSeq" id="XP_002938637.1">
    <property type="nucleotide sequence ID" value="XM_002938591.5"/>
</dbReference>
<dbReference type="SMR" id="F7EMX9"/>
<dbReference type="FunCoup" id="F7EMX9">
    <property type="interactions" value="2490"/>
</dbReference>
<dbReference type="STRING" id="8364.ENSXETP00000016641"/>
<dbReference type="PaxDb" id="8364-ENSXETP00000028965"/>
<dbReference type="GeneID" id="100492340"/>
<dbReference type="KEGG" id="xtr:100492340"/>
<dbReference type="AGR" id="Xenbase:XB-GENE-6258076"/>
<dbReference type="CTD" id="10538"/>
<dbReference type="Xenbase" id="XB-GENE-6258076">
    <property type="gene designation" value="batf"/>
</dbReference>
<dbReference type="eggNOG" id="KOG1414">
    <property type="taxonomic scope" value="Eukaryota"/>
</dbReference>
<dbReference type="HOGENOM" id="CLU_088612_4_0_1"/>
<dbReference type="InParanoid" id="F7EMX9"/>
<dbReference type="OMA" id="APQTTHD"/>
<dbReference type="OrthoDB" id="295274at2759"/>
<dbReference type="PhylomeDB" id="F7EMX9"/>
<dbReference type="TreeFam" id="TF332340"/>
<dbReference type="Proteomes" id="UP000008143">
    <property type="component" value="Chromosome 8"/>
</dbReference>
<dbReference type="GO" id="GO:0005737">
    <property type="term" value="C:cytoplasm"/>
    <property type="evidence" value="ECO:0000250"/>
    <property type="project" value="UniProtKB"/>
</dbReference>
<dbReference type="GO" id="GO:0005634">
    <property type="term" value="C:nucleus"/>
    <property type="evidence" value="ECO:0000250"/>
    <property type="project" value="UniProtKB"/>
</dbReference>
<dbReference type="GO" id="GO:0003700">
    <property type="term" value="F:DNA-binding transcription factor activity"/>
    <property type="evidence" value="ECO:0000250"/>
    <property type="project" value="UniProtKB"/>
</dbReference>
<dbReference type="GO" id="GO:0043565">
    <property type="term" value="F:sequence-specific DNA binding"/>
    <property type="evidence" value="ECO:0000250"/>
    <property type="project" value="UniProtKB"/>
</dbReference>
<dbReference type="GO" id="GO:0042832">
    <property type="term" value="P:defense response to protozoan"/>
    <property type="evidence" value="ECO:0000250"/>
    <property type="project" value="UniProtKB"/>
</dbReference>
<dbReference type="GO" id="GO:0006974">
    <property type="term" value="P:DNA damage response"/>
    <property type="evidence" value="ECO:0000250"/>
    <property type="project" value="UniProtKB"/>
</dbReference>
<dbReference type="GO" id="GO:0030330">
    <property type="term" value="P:DNA damage response, signal transduction by p53 class mediator"/>
    <property type="evidence" value="ECO:0000250"/>
    <property type="project" value="UniProtKB"/>
</dbReference>
<dbReference type="GO" id="GO:0060218">
    <property type="term" value="P:hematopoietic stem cell differentiation"/>
    <property type="evidence" value="ECO:0000250"/>
    <property type="project" value="UniProtKB"/>
</dbReference>
<dbReference type="GO" id="GO:0045190">
    <property type="term" value="P:isotype switching"/>
    <property type="evidence" value="ECO:0000250"/>
    <property type="project" value="UniProtKB"/>
</dbReference>
<dbReference type="GO" id="GO:0002320">
    <property type="term" value="P:lymphoid progenitor cell differentiation"/>
    <property type="evidence" value="ECO:0000250"/>
    <property type="project" value="UniProtKB"/>
</dbReference>
<dbReference type="GO" id="GO:0043011">
    <property type="term" value="P:myeloid dendritic cell differentiation"/>
    <property type="evidence" value="ECO:0000250"/>
    <property type="project" value="UniProtKB"/>
</dbReference>
<dbReference type="GO" id="GO:0001819">
    <property type="term" value="P:positive regulation of cytokine production"/>
    <property type="evidence" value="ECO:0000250"/>
    <property type="project" value="UniProtKB"/>
</dbReference>
<dbReference type="GO" id="GO:0006357">
    <property type="term" value="P:regulation of transcription by RNA polymerase II"/>
    <property type="evidence" value="ECO:0007669"/>
    <property type="project" value="InterPro"/>
</dbReference>
<dbReference type="GO" id="GO:0072539">
    <property type="term" value="P:T-helper 17 cell differentiation"/>
    <property type="evidence" value="ECO:0000250"/>
    <property type="project" value="UniProtKB"/>
</dbReference>
<dbReference type="GO" id="GO:0072540">
    <property type="term" value="P:T-helper 17 cell lineage commitment"/>
    <property type="evidence" value="ECO:0000250"/>
    <property type="project" value="UniProtKB"/>
</dbReference>
<dbReference type="GO" id="GO:0045064">
    <property type="term" value="P:T-helper 2 cell differentiation"/>
    <property type="evidence" value="ECO:0000250"/>
    <property type="project" value="UniProtKB"/>
</dbReference>
<dbReference type="CDD" id="cd14701">
    <property type="entry name" value="bZIP_BATF"/>
    <property type="match status" value="1"/>
</dbReference>
<dbReference type="FunFam" id="1.20.5.170:FF:000043">
    <property type="entry name" value="Basic leucine zipper transcriptional factor ATF-like"/>
    <property type="match status" value="1"/>
</dbReference>
<dbReference type="Gene3D" id="1.20.5.170">
    <property type="match status" value="1"/>
</dbReference>
<dbReference type="InterPro" id="IPR000837">
    <property type="entry name" value="AP-1"/>
</dbReference>
<dbReference type="InterPro" id="IPR004827">
    <property type="entry name" value="bZIP"/>
</dbReference>
<dbReference type="InterPro" id="IPR046347">
    <property type="entry name" value="bZIP_sf"/>
</dbReference>
<dbReference type="PANTHER" id="PTHR23351:SF14">
    <property type="entry name" value="BASIC LEUCINE ZIPPER TRANSCRIPTIONAL FACTOR ATF-LIKE"/>
    <property type="match status" value="1"/>
</dbReference>
<dbReference type="PANTHER" id="PTHR23351">
    <property type="entry name" value="FOS TRANSCRIPTION FACTOR-RELATED"/>
    <property type="match status" value="1"/>
</dbReference>
<dbReference type="Pfam" id="PF00170">
    <property type="entry name" value="bZIP_1"/>
    <property type="match status" value="1"/>
</dbReference>
<dbReference type="PRINTS" id="PR00042">
    <property type="entry name" value="LEUZIPPRFOS"/>
</dbReference>
<dbReference type="SMART" id="SM00338">
    <property type="entry name" value="BRLZ"/>
    <property type="match status" value="1"/>
</dbReference>
<dbReference type="SUPFAM" id="SSF57959">
    <property type="entry name" value="Leucine zipper domain"/>
    <property type="match status" value="1"/>
</dbReference>
<dbReference type="PROSITE" id="PS50217">
    <property type="entry name" value="BZIP"/>
    <property type="match status" value="1"/>
</dbReference>
<dbReference type="PROSITE" id="PS00036">
    <property type="entry name" value="BZIP_BASIC"/>
    <property type="match status" value="1"/>
</dbReference>